<comment type="catalytic activity">
    <reaction evidence="1">
        <text>D-ribulose + ATP = D-ribulose 5-phosphate + ADP + H(+)</text>
        <dbReference type="Rhea" id="RHEA:17601"/>
        <dbReference type="ChEBI" id="CHEBI:15378"/>
        <dbReference type="ChEBI" id="CHEBI:17173"/>
        <dbReference type="ChEBI" id="CHEBI:30616"/>
        <dbReference type="ChEBI" id="CHEBI:58121"/>
        <dbReference type="ChEBI" id="CHEBI:456216"/>
        <dbReference type="EC" id="2.7.1.16"/>
    </reaction>
</comment>
<comment type="catalytic activity">
    <reaction evidence="1">
        <text>L-ribulose + ATP = L-ribulose 5-phosphate + ADP + H(+)</text>
        <dbReference type="Rhea" id="RHEA:22072"/>
        <dbReference type="ChEBI" id="CHEBI:15378"/>
        <dbReference type="ChEBI" id="CHEBI:16880"/>
        <dbReference type="ChEBI" id="CHEBI:30616"/>
        <dbReference type="ChEBI" id="CHEBI:58226"/>
        <dbReference type="ChEBI" id="CHEBI:456216"/>
        <dbReference type="EC" id="2.7.1.16"/>
    </reaction>
</comment>
<comment type="pathway">
    <text evidence="1">Carbohydrate degradation; L-arabinose degradation via L-ribulose; D-xylulose 5-phosphate from L-arabinose (bacterial route): step 2/3.</text>
</comment>
<comment type="similarity">
    <text evidence="1">Belongs to the ribulokinase family.</text>
</comment>
<accession>Q1C7J2</accession>
<proteinExistence type="inferred from homology"/>
<dbReference type="EC" id="2.7.1.16" evidence="1"/>
<dbReference type="EMBL" id="CP000308">
    <property type="protein sequence ID" value="ABG13580.1"/>
    <property type="molecule type" value="Genomic_DNA"/>
</dbReference>
<dbReference type="RefSeq" id="WP_002210590.1">
    <property type="nucleotide sequence ID" value="NZ_CP009906.1"/>
</dbReference>
<dbReference type="SMR" id="Q1C7J2"/>
<dbReference type="KEGG" id="ypa:YPA_1614"/>
<dbReference type="UniPathway" id="UPA00145">
    <property type="reaction ID" value="UER00566"/>
</dbReference>
<dbReference type="Proteomes" id="UP000001971">
    <property type="component" value="Chromosome"/>
</dbReference>
<dbReference type="GO" id="GO:0005737">
    <property type="term" value="C:cytoplasm"/>
    <property type="evidence" value="ECO:0007669"/>
    <property type="project" value="TreeGrafter"/>
</dbReference>
<dbReference type="GO" id="GO:0005524">
    <property type="term" value="F:ATP binding"/>
    <property type="evidence" value="ECO:0007669"/>
    <property type="project" value="UniProtKB-KW"/>
</dbReference>
<dbReference type="GO" id="GO:0019150">
    <property type="term" value="F:D-ribulokinase activity"/>
    <property type="evidence" value="ECO:0007669"/>
    <property type="project" value="RHEA"/>
</dbReference>
<dbReference type="GO" id="GO:0008741">
    <property type="term" value="F:ribulokinase activity"/>
    <property type="evidence" value="ECO:0007669"/>
    <property type="project" value="UniProtKB-UniRule"/>
</dbReference>
<dbReference type="GO" id="GO:0019569">
    <property type="term" value="P:L-arabinose catabolic process to xylulose 5-phosphate"/>
    <property type="evidence" value="ECO:0007669"/>
    <property type="project" value="UniProtKB-UniRule"/>
</dbReference>
<dbReference type="CDD" id="cd07781">
    <property type="entry name" value="ASKHA_NBD_FGGY_L-RBK"/>
    <property type="match status" value="1"/>
</dbReference>
<dbReference type="Gene3D" id="1.20.58.2240">
    <property type="match status" value="1"/>
</dbReference>
<dbReference type="Gene3D" id="3.30.420.40">
    <property type="match status" value="1"/>
</dbReference>
<dbReference type="HAMAP" id="MF_00520">
    <property type="entry name" value="Ribulokinase"/>
    <property type="match status" value="1"/>
</dbReference>
<dbReference type="InterPro" id="IPR043129">
    <property type="entry name" value="ATPase_NBD"/>
</dbReference>
<dbReference type="InterPro" id="IPR018485">
    <property type="entry name" value="FGGY_C"/>
</dbReference>
<dbReference type="InterPro" id="IPR005929">
    <property type="entry name" value="Ribulokinase"/>
</dbReference>
<dbReference type="NCBIfam" id="TIGR01234">
    <property type="entry name" value="L-ribulokinase"/>
    <property type="match status" value="1"/>
</dbReference>
<dbReference type="NCBIfam" id="NF003154">
    <property type="entry name" value="PRK04123.1"/>
    <property type="match status" value="1"/>
</dbReference>
<dbReference type="PANTHER" id="PTHR43435:SF4">
    <property type="entry name" value="FGGY CARBOHYDRATE KINASE DOMAIN-CONTAINING PROTEIN"/>
    <property type="match status" value="1"/>
</dbReference>
<dbReference type="PANTHER" id="PTHR43435">
    <property type="entry name" value="RIBULOKINASE"/>
    <property type="match status" value="1"/>
</dbReference>
<dbReference type="Pfam" id="PF02782">
    <property type="entry name" value="FGGY_C"/>
    <property type="match status" value="1"/>
</dbReference>
<dbReference type="SUPFAM" id="SSF53067">
    <property type="entry name" value="Actin-like ATPase domain"/>
    <property type="match status" value="2"/>
</dbReference>
<reference key="1">
    <citation type="journal article" date="2006" name="J. Bacteriol.">
        <title>Complete genome sequence of Yersinia pestis strains Antiqua and Nepal516: evidence of gene reduction in an emerging pathogen.</title>
        <authorList>
            <person name="Chain P.S.G."/>
            <person name="Hu P."/>
            <person name="Malfatti S.A."/>
            <person name="Radnedge L."/>
            <person name="Larimer F."/>
            <person name="Vergez L.M."/>
            <person name="Worsham P."/>
            <person name="Chu M.C."/>
            <person name="Andersen G.L."/>
        </authorList>
    </citation>
    <scope>NUCLEOTIDE SEQUENCE [LARGE SCALE GENOMIC DNA]</scope>
    <source>
        <strain>Antiqua</strain>
    </source>
</reference>
<name>ARAB_YERPA</name>
<organism>
    <name type="scientific">Yersinia pestis bv. Antiqua (strain Antiqua)</name>
    <dbReference type="NCBI Taxonomy" id="360102"/>
    <lineage>
        <taxon>Bacteria</taxon>
        <taxon>Pseudomonadati</taxon>
        <taxon>Pseudomonadota</taxon>
        <taxon>Gammaproteobacteria</taxon>
        <taxon>Enterobacterales</taxon>
        <taxon>Yersiniaceae</taxon>
        <taxon>Yersinia</taxon>
    </lineage>
</organism>
<protein>
    <recommendedName>
        <fullName evidence="1">Ribulokinase</fullName>
        <ecNumber evidence="1">2.7.1.16</ecNumber>
    </recommendedName>
</protein>
<evidence type="ECO:0000255" key="1">
    <source>
        <dbReference type="HAMAP-Rule" id="MF_00520"/>
    </source>
</evidence>
<keyword id="KW-0054">Arabinose catabolism</keyword>
<keyword id="KW-0067">ATP-binding</keyword>
<keyword id="KW-0119">Carbohydrate metabolism</keyword>
<keyword id="KW-0418">Kinase</keyword>
<keyword id="KW-0547">Nucleotide-binding</keyword>
<keyword id="KW-0808">Transferase</keyword>
<feature type="chain" id="PRO_0000263410" description="Ribulokinase">
    <location>
        <begin position="1"/>
        <end position="567"/>
    </location>
</feature>
<sequence>MTGNVISADGAIALGLDFGSDSVRVLAVDCQHGTEIDTEVVYYPRWKKGLYCQAAQNQFRHHPLDYIEAMEQAIRQMVKRLSEEQRQHIVGIGVDSTGSTPAPIDEQGQVLALRPDFADNPNAMFVLWKDHTAIEEAEEINRLCRSGEFADYSRYIGGVYSSEWFWAKILHVTRADVAVREAAVSWIELCDWVPALLSGTTAPQDIQRGRCSAGHKSLWHPSWGGLPPRAFLAALDTSLVNDLDYPMFTDTYTAERPVGQITAEWAERLGLPTTVILSGGAFDCHMGAVGAGAQPYTLVKVIGTSTCDILIADDQRVGDRAIAGICGQVEGSVLPGWIGMEAGQSAFGDMYAWFSNLLSWPLHQAALTQPEWQPQLKQIESNLLASLTRAWAQNPSLDHLPVVLDWFNGRRTPNANQRLKGVITDLNLGTDAPTLFGGFIAATAFGARAIMECFEQQDIPIDNVLALGGIARKSPVIMQVCADVMNRPLQIVASDQCCALGAAIFAAVAAGAHDDVPTAQRHMACNIERTLIPDPVQVVRYQQLYQRYQQWCHTAEPHYAPVTKVIH</sequence>
<gene>
    <name evidence="1" type="primary">araB</name>
    <name type="ordered locus">YPA_1614</name>
</gene>